<reference key="1">
    <citation type="submission" date="2006-12" db="EMBL/GenBank/DDBJ databases">
        <title>Complete sequence of Shewanella sp. W3-18-1.</title>
        <authorList>
            <consortium name="US DOE Joint Genome Institute"/>
            <person name="Copeland A."/>
            <person name="Lucas S."/>
            <person name="Lapidus A."/>
            <person name="Barry K."/>
            <person name="Detter J.C."/>
            <person name="Glavina del Rio T."/>
            <person name="Hammon N."/>
            <person name="Israni S."/>
            <person name="Dalin E."/>
            <person name="Tice H."/>
            <person name="Pitluck S."/>
            <person name="Chain P."/>
            <person name="Malfatti S."/>
            <person name="Shin M."/>
            <person name="Vergez L."/>
            <person name="Schmutz J."/>
            <person name="Larimer F."/>
            <person name="Land M."/>
            <person name="Hauser L."/>
            <person name="Kyrpides N."/>
            <person name="Lykidis A."/>
            <person name="Tiedje J."/>
            <person name="Richardson P."/>
        </authorList>
    </citation>
    <scope>NUCLEOTIDE SEQUENCE [LARGE SCALE GENOMIC DNA]</scope>
    <source>
        <strain>W3-18-1</strain>
    </source>
</reference>
<dbReference type="EMBL" id="CP000503">
    <property type="protein sequence ID" value="ABM23017.1"/>
    <property type="molecule type" value="Genomic_DNA"/>
</dbReference>
<dbReference type="RefSeq" id="WP_007644429.1">
    <property type="nucleotide sequence ID" value="NC_008750.1"/>
</dbReference>
<dbReference type="SMR" id="A1REC2"/>
<dbReference type="GeneID" id="94726194"/>
<dbReference type="KEGG" id="shw:Sputw3181_0164"/>
<dbReference type="HOGENOM" id="CLU_158491_1_2_6"/>
<dbReference type="Proteomes" id="UP000002597">
    <property type="component" value="Chromosome"/>
</dbReference>
<dbReference type="GO" id="GO:0022625">
    <property type="term" value="C:cytosolic large ribosomal subunit"/>
    <property type="evidence" value="ECO:0007669"/>
    <property type="project" value="TreeGrafter"/>
</dbReference>
<dbReference type="GO" id="GO:0003735">
    <property type="term" value="F:structural constituent of ribosome"/>
    <property type="evidence" value="ECO:0007669"/>
    <property type="project" value="InterPro"/>
</dbReference>
<dbReference type="GO" id="GO:0006412">
    <property type="term" value="P:translation"/>
    <property type="evidence" value="ECO:0007669"/>
    <property type="project" value="UniProtKB-UniRule"/>
</dbReference>
<dbReference type="CDD" id="cd00427">
    <property type="entry name" value="Ribosomal_L29_HIP"/>
    <property type="match status" value="1"/>
</dbReference>
<dbReference type="FunFam" id="1.10.287.310:FF:000001">
    <property type="entry name" value="50S ribosomal protein L29"/>
    <property type="match status" value="1"/>
</dbReference>
<dbReference type="Gene3D" id="1.10.287.310">
    <property type="match status" value="1"/>
</dbReference>
<dbReference type="HAMAP" id="MF_00374">
    <property type="entry name" value="Ribosomal_uL29"/>
    <property type="match status" value="1"/>
</dbReference>
<dbReference type="InterPro" id="IPR050063">
    <property type="entry name" value="Ribosomal_protein_uL29"/>
</dbReference>
<dbReference type="InterPro" id="IPR001854">
    <property type="entry name" value="Ribosomal_uL29"/>
</dbReference>
<dbReference type="InterPro" id="IPR018254">
    <property type="entry name" value="Ribosomal_uL29_CS"/>
</dbReference>
<dbReference type="InterPro" id="IPR036049">
    <property type="entry name" value="Ribosomal_uL29_sf"/>
</dbReference>
<dbReference type="NCBIfam" id="TIGR00012">
    <property type="entry name" value="L29"/>
    <property type="match status" value="1"/>
</dbReference>
<dbReference type="PANTHER" id="PTHR10916">
    <property type="entry name" value="60S RIBOSOMAL PROTEIN L35/50S RIBOSOMAL PROTEIN L29"/>
    <property type="match status" value="1"/>
</dbReference>
<dbReference type="PANTHER" id="PTHR10916:SF0">
    <property type="entry name" value="LARGE RIBOSOMAL SUBUNIT PROTEIN UL29C"/>
    <property type="match status" value="1"/>
</dbReference>
<dbReference type="Pfam" id="PF00831">
    <property type="entry name" value="Ribosomal_L29"/>
    <property type="match status" value="1"/>
</dbReference>
<dbReference type="SUPFAM" id="SSF46561">
    <property type="entry name" value="Ribosomal protein L29 (L29p)"/>
    <property type="match status" value="1"/>
</dbReference>
<dbReference type="PROSITE" id="PS00579">
    <property type="entry name" value="RIBOSOMAL_L29"/>
    <property type="match status" value="1"/>
</dbReference>
<organism>
    <name type="scientific">Shewanella sp. (strain W3-18-1)</name>
    <dbReference type="NCBI Taxonomy" id="351745"/>
    <lineage>
        <taxon>Bacteria</taxon>
        <taxon>Pseudomonadati</taxon>
        <taxon>Pseudomonadota</taxon>
        <taxon>Gammaproteobacteria</taxon>
        <taxon>Alteromonadales</taxon>
        <taxon>Shewanellaceae</taxon>
        <taxon>Shewanella</taxon>
    </lineage>
</organism>
<keyword id="KW-0687">Ribonucleoprotein</keyword>
<keyword id="KW-0689">Ribosomal protein</keyword>
<protein>
    <recommendedName>
        <fullName evidence="1">Large ribosomal subunit protein uL29</fullName>
    </recommendedName>
    <alternativeName>
        <fullName evidence="2">50S ribosomal protein L29</fullName>
    </alternativeName>
</protein>
<sequence length="63" mass="7170">MKASELREKSVEELNAELLGLLREQFNLRMQHATGQLTQTHQLKLVRRNIARVKTIITSKAGA</sequence>
<accession>A1REC2</accession>
<comment type="similarity">
    <text evidence="1">Belongs to the universal ribosomal protein uL29 family.</text>
</comment>
<feature type="chain" id="PRO_1000007605" description="Large ribosomal subunit protein uL29">
    <location>
        <begin position="1"/>
        <end position="63"/>
    </location>
</feature>
<proteinExistence type="inferred from homology"/>
<gene>
    <name evidence="1" type="primary">rpmC</name>
    <name type="ordered locus">Sputw3181_0164</name>
</gene>
<evidence type="ECO:0000255" key="1">
    <source>
        <dbReference type="HAMAP-Rule" id="MF_00374"/>
    </source>
</evidence>
<evidence type="ECO:0000305" key="2"/>
<name>RL29_SHESW</name>